<name>DNLJ_LEPIN</name>
<comment type="function">
    <text evidence="1">DNA ligase that catalyzes the formation of phosphodiester linkages between 5'-phosphoryl and 3'-hydroxyl groups in double-stranded DNA using NAD as a coenzyme and as the energy source for the reaction. It is essential for DNA replication and repair of damaged DNA.</text>
</comment>
<comment type="catalytic activity">
    <reaction evidence="1">
        <text>NAD(+) + (deoxyribonucleotide)n-3'-hydroxyl + 5'-phospho-(deoxyribonucleotide)m = (deoxyribonucleotide)n+m + AMP + beta-nicotinamide D-nucleotide.</text>
        <dbReference type="EC" id="6.5.1.2"/>
    </reaction>
</comment>
<comment type="cofactor">
    <cofactor evidence="1">
        <name>Mg(2+)</name>
        <dbReference type="ChEBI" id="CHEBI:18420"/>
    </cofactor>
    <cofactor evidence="1">
        <name>Mn(2+)</name>
        <dbReference type="ChEBI" id="CHEBI:29035"/>
    </cofactor>
</comment>
<comment type="similarity">
    <text evidence="1">Belongs to the NAD-dependent DNA ligase family. LigA subfamily.</text>
</comment>
<feature type="chain" id="PRO_0000313292" description="DNA ligase">
    <location>
        <begin position="1"/>
        <end position="681"/>
    </location>
</feature>
<feature type="domain" description="BRCT" evidence="1">
    <location>
        <begin position="593"/>
        <end position="681"/>
    </location>
</feature>
<feature type="active site" description="N6-AMP-lysine intermediate" evidence="1">
    <location>
        <position position="122"/>
    </location>
</feature>
<feature type="binding site" evidence="1">
    <location>
        <begin position="45"/>
        <end position="49"/>
    </location>
    <ligand>
        <name>NAD(+)</name>
        <dbReference type="ChEBI" id="CHEBI:57540"/>
    </ligand>
</feature>
<feature type="binding site" evidence="1">
    <location>
        <begin position="94"/>
        <end position="95"/>
    </location>
    <ligand>
        <name>NAD(+)</name>
        <dbReference type="ChEBI" id="CHEBI:57540"/>
    </ligand>
</feature>
<feature type="binding site" evidence="1">
    <location>
        <position position="120"/>
    </location>
    <ligand>
        <name>NAD(+)</name>
        <dbReference type="ChEBI" id="CHEBI:57540"/>
    </ligand>
</feature>
<feature type="binding site" evidence="1">
    <location>
        <position position="143"/>
    </location>
    <ligand>
        <name>NAD(+)</name>
        <dbReference type="ChEBI" id="CHEBI:57540"/>
    </ligand>
</feature>
<feature type="binding site" evidence="1">
    <location>
        <position position="177"/>
    </location>
    <ligand>
        <name>NAD(+)</name>
        <dbReference type="ChEBI" id="CHEBI:57540"/>
    </ligand>
</feature>
<feature type="binding site" evidence="1">
    <location>
        <position position="289"/>
    </location>
    <ligand>
        <name>NAD(+)</name>
        <dbReference type="ChEBI" id="CHEBI:57540"/>
    </ligand>
</feature>
<feature type="binding site" evidence="1">
    <location>
        <position position="313"/>
    </location>
    <ligand>
        <name>NAD(+)</name>
        <dbReference type="ChEBI" id="CHEBI:57540"/>
    </ligand>
</feature>
<feature type="binding site" evidence="1">
    <location>
        <position position="403"/>
    </location>
    <ligand>
        <name>Zn(2+)</name>
        <dbReference type="ChEBI" id="CHEBI:29105"/>
    </ligand>
</feature>
<feature type="binding site" evidence="1">
    <location>
        <position position="406"/>
    </location>
    <ligand>
        <name>Zn(2+)</name>
        <dbReference type="ChEBI" id="CHEBI:29105"/>
    </ligand>
</feature>
<feature type="binding site" evidence="1">
    <location>
        <position position="421"/>
    </location>
    <ligand>
        <name>Zn(2+)</name>
        <dbReference type="ChEBI" id="CHEBI:29105"/>
    </ligand>
</feature>
<feature type="binding site" evidence="1">
    <location>
        <position position="426"/>
    </location>
    <ligand>
        <name>Zn(2+)</name>
        <dbReference type="ChEBI" id="CHEBI:29105"/>
    </ligand>
</feature>
<reference key="1">
    <citation type="journal article" date="2003" name="Nature">
        <title>Unique physiological and pathogenic features of Leptospira interrogans revealed by whole-genome sequencing.</title>
        <authorList>
            <person name="Ren S.-X."/>
            <person name="Fu G."/>
            <person name="Jiang X.-G."/>
            <person name="Zeng R."/>
            <person name="Miao Y.-G."/>
            <person name="Xu H."/>
            <person name="Zhang Y.-X."/>
            <person name="Xiong H."/>
            <person name="Lu G."/>
            <person name="Lu L.-F."/>
            <person name="Jiang H.-Q."/>
            <person name="Jia J."/>
            <person name="Tu Y.-F."/>
            <person name="Jiang J.-X."/>
            <person name="Gu W.-Y."/>
            <person name="Zhang Y.-Q."/>
            <person name="Cai Z."/>
            <person name="Sheng H.-H."/>
            <person name="Yin H.-F."/>
            <person name="Zhang Y."/>
            <person name="Zhu G.-F."/>
            <person name="Wan M."/>
            <person name="Huang H.-L."/>
            <person name="Qian Z."/>
            <person name="Wang S.-Y."/>
            <person name="Ma W."/>
            <person name="Yao Z.-J."/>
            <person name="Shen Y."/>
            <person name="Qiang B.-Q."/>
            <person name="Xia Q.-C."/>
            <person name="Guo X.-K."/>
            <person name="Danchin A."/>
            <person name="Saint Girons I."/>
            <person name="Somerville R.L."/>
            <person name="Wen Y.-M."/>
            <person name="Shi M.-H."/>
            <person name="Chen Z."/>
            <person name="Xu J.-G."/>
            <person name="Zhao G.-P."/>
        </authorList>
    </citation>
    <scope>NUCLEOTIDE SEQUENCE [LARGE SCALE GENOMIC DNA]</scope>
    <source>
        <strain>56601</strain>
    </source>
</reference>
<proteinExistence type="inferred from homology"/>
<sequence length="681" mass="76912">MPKKKEDSQKTLSEKEAKGLIAKLSDEIRHHQYLYYVKNDPKISDFDFDQLFRRLQDLEEEFPQFKDLASPTLVVGSDLDKDFEKFQHKLPVLSLINTYNDNELLEWVNKTDPEGLYSVEWKIDGASIVLYYENGILKNGVTRGSGGIGDDVTDNIRTIRNIPLRLPKPITVYLRGEVFMTFKDFEEFNALSSGKYANPRNLSAGSIKQKNSSDTAKRPLRIFTYDATFPNMEKKFKTHQEIFSKLEKLTFPVPPNTAFVSGSKIAKTIQEFKKQKDSLGFPTDGLVIKLNDISKRDALGYTSHSPRWARAYKFDAIMKESKIVDITYAVGRTGKITPRAEIEPISLAGTTVTFATLHNQDYIDELGVGIGAIVRVAKRGEIIPAVEEVVTPGKEVFKIPDRCPSCNTQTIKKESLVDLFCPNPDCPDRVKNGIIFYCQRKQMDIEGLGDKQIEFLYDHDYIKSIADLYDLKDQKEKLMEEEGFGEKSVNIILKGIEQSKQKDFRFLLPSLGLSELGHKVTELLIEHGIDSIDEILSIAKDQKKIESLLEIPGIGPSTIQAFQENFSDKRILKLIERLKKAGLKMKADPIQVADQQPFAGQSWCVTGSFENFQPRDKAMDLIVYYGGRKVSAVSSKTTHLLAGPGAGSKLEKANELGVSVYDEKQFLDLLKSLKIDFKNLI</sequence>
<protein>
    <recommendedName>
        <fullName evidence="1">DNA ligase</fullName>
        <ecNumber evidence="1">6.5.1.2</ecNumber>
    </recommendedName>
    <alternativeName>
        <fullName evidence="1">Polydeoxyribonucleotide synthase [NAD(+)]</fullName>
    </alternativeName>
</protein>
<accession>Q8EYU4</accession>
<gene>
    <name evidence="1" type="primary">ligA</name>
    <name type="ordered locus">LA_4119</name>
</gene>
<keyword id="KW-0227">DNA damage</keyword>
<keyword id="KW-0234">DNA repair</keyword>
<keyword id="KW-0235">DNA replication</keyword>
<keyword id="KW-0436">Ligase</keyword>
<keyword id="KW-0460">Magnesium</keyword>
<keyword id="KW-0464">Manganese</keyword>
<keyword id="KW-0479">Metal-binding</keyword>
<keyword id="KW-0520">NAD</keyword>
<keyword id="KW-1185">Reference proteome</keyword>
<keyword id="KW-0862">Zinc</keyword>
<evidence type="ECO:0000255" key="1">
    <source>
        <dbReference type="HAMAP-Rule" id="MF_01588"/>
    </source>
</evidence>
<dbReference type="EC" id="6.5.1.2" evidence="1"/>
<dbReference type="EMBL" id="AE010300">
    <property type="protein sequence ID" value="AAN51317.1"/>
    <property type="molecule type" value="Genomic_DNA"/>
</dbReference>
<dbReference type="RefSeq" id="NP_714299.1">
    <property type="nucleotide sequence ID" value="NC_004342.2"/>
</dbReference>
<dbReference type="RefSeq" id="WP_001124831.1">
    <property type="nucleotide sequence ID" value="NC_004342.2"/>
</dbReference>
<dbReference type="SMR" id="Q8EYU4"/>
<dbReference type="FunCoup" id="Q8EYU4">
    <property type="interactions" value="375"/>
</dbReference>
<dbReference type="STRING" id="189518.LA_4119"/>
<dbReference type="PaxDb" id="189518-LA_4119"/>
<dbReference type="EnsemblBacteria" id="AAN51317">
    <property type="protein sequence ID" value="AAN51317"/>
    <property type="gene ID" value="LA_4119"/>
</dbReference>
<dbReference type="KEGG" id="lil:LA_4119"/>
<dbReference type="PATRIC" id="fig|189518.3.peg.4087"/>
<dbReference type="HOGENOM" id="CLU_007764_2_1_12"/>
<dbReference type="InParanoid" id="Q8EYU4"/>
<dbReference type="OrthoDB" id="9759736at2"/>
<dbReference type="Proteomes" id="UP000001408">
    <property type="component" value="Chromosome I"/>
</dbReference>
<dbReference type="GO" id="GO:0005829">
    <property type="term" value="C:cytosol"/>
    <property type="evidence" value="ECO:0000318"/>
    <property type="project" value="GO_Central"/>
</dbReference>
<dbReference type="GO" id="GO:0003911">
    <property type="term" value="F:DNA ligase (NAD+) activity"/>
    <property type="evidence" value="ECO:0000318"/>
    <property type="project" value="GO_Central"/>
</dbReference>
<dbReference type="GO" id="GO:0046872">
    <property type="term" value="F:metal ion binding"/>
    <property type="evidence" value="ECO:0007669"/>
    <property type="project" value="UniProtKB-KW"/>
</dbReference>
<dbReference type="GO" id="GO:0006281">
    <property type="term" value="P:DNA repair"/>
    <property type="evidence" value="ECO:0007669"/>
    <property type="project" value="UniProtKB-KW"/>
</dbReference>
<dbReference type="GO" id="GO:0006260">
    <property type="term" value="P:DNA replication"/>
    <property type="evidence" value="ECO:0007669"/>
    <property type="project" value="UniProtKB-KW"/>
</dbReference>
<dbReference type="CDD" id="cd17748">
    <property type="entry name" value="BRCT_DNA_ligase_like"/>
    <property type="match status" value="1"/>
</dbReference>
<dbReference type="CDD" id="cd00114">
    <property type="entry name" value="LIGANc"/>
    <property type="match status" value="1"/>
</dbReference>
<dbReference type="FunFam" id="1.10.150.20:FF:000007">
    <property type="entry name" value="DNA ligase"/>
    <property type="match status" value="1"/>
</dbReference>
<dbReference type="FunFam" id="3.30.470.30:FF:000026">
    <property type="entry name" value="DNA ligase"/>
    <property type="match status" value="1"/>
</dbReference>
<dbReference type="FunFam" id="3.40.50.10190:FF:000087">
    <property type="entry name" value="DNA ligase"/>
    <property type="match status" value="1"/>
</dbReference>
<dbReference type="Gene3D" id="6.20.10.30">
    <property type="match status" value="1"/>
</dbReference>
<dbReference type="Gene3D" id="1.10.150.20">
    <property type="entry name" value="5' to 3' exonuclease, C-terminal subdomain"/>
    <property type="match status" value="2"/>
</dbReference>
<dbReference type="Gene3D" id="3.40.50.10190">
    <property type="entry name" value="BRCT domain"/>
    <property type="match status" value="1"/>
</dbReference>
<dbReference type="Gene3D" id="3.30.470.30">
    <property type="entry name" value="DNA ligase/mRNA capping enzyme"/>
    <property type="match status" value="1"/>
</dbReference>
<dbReference type="Gene3D" id="1.10.287.610">
    <property type="entry name" value="Helix hairpin bin"/>
    <property type="match status" value="1"/>
</dbReference>
<dbReference type="Gene3D" id="2.40.50.140">
    <property type="entry name" value="Nucleic acid-binding proteins"/>
    <property type="match status" value="1"/>
</dbReference>
<dbReference type="HAMAP" id="MF_01588">
    <property type="entry name" value="DNA_ligase_A"/>
    <property type="match status" value="1"/>
</dbReference>
<dbReference type="InterPro" id="IPR001357">
    <property type="entry name" value="BRCT_dom"/>
</dbReference>
<dbReference type="InterPro" id="IPR036420">
    <property type="entry name" value="BRCT_dom_sf"/>
</dbReference>
<dbReference type="InterPro" id="IPR001679">
    <property type="entry name" value="DNA_ligase"/>
</dbReference>
<dbReference type="InterPro" id="IPR013839">
    <property type="entry name" value="DNAligase_adenylation"/>
</dbReference>
<dbReference type="InterPro" id="IPR013840">
    <property type="entry name" value="DNAligase_N"/>
</dbReference>
<dbReference type="InterPro" id="IPR012340">
    <property type="entry name" value="NA-bd_OB-fold"/>
</dbReference>
<dbReference type="InterPro" id="IPR004150">
    <property type="entry name" value="NAD_DNA_ligase_OB"/>
</dbReference>
<dbReference type="InterPro" id="IPR010994">
    <property type="entry name" value="RuvA_2-like"/>
</dbReference>
<dbReference type="InterPro" id="IPR004149">
    <property type="entry name" value="Znf_DNAligase_C4"/>
</dbReference>
<dbReference type="NCBIfam" id="TIGR00575">
    <property type="entry name" value="dnlj"/>
    <property type="match status" value="1"/>
</dbReference>
<dbReference type="NCBIfam" id="NF005932">
    <property type="entry name" value="PRK07956.1"/>
    <property type="match status" value="1"/>
</dbReference>
<dbReference type="PANTHER" id="PTHR23389">
    <property type="entry name" value="CHROMOSOME TRANSMISSION FIDELITY FACTOR 18"/>
    <property type="match status" value="1"/>
</dbReference>
<dbReference type="PANTHER" id="PTHR23389:SF9">
    <property type="entry name" value="DNA LIGASE"/>
    <property type="match status" value="1"/>
</dbReference>
<dbReference type="Pfam" id="PF00533">
    <property type="entry name" value="BRCT"/>
    <property type="match status" value="1"/>
</dbReference>
<dbReference type="Pfam" id="PF01653">
    <property type="entry name" value="DNA_ligase_aden"/>
    <property type="match status" value="1"/>
</dbReference>
<dbReference type="Pfam" id="PF03120">
    <property type="entry name" value="DNA_ligase_OB"/>
    <property type="match status" value="1"/>
</dbReference>
<dbReference type="Pfam" id="PF03119">
    <property type="entry name" value="DNA_ligase_ZBD"/>
    <property type="match status" value="1"/>
</dbReference>
<dbReference type="Pfam" id="PF14520">
    <property type="entry name" value="HHH_5"/>
    <property type="match status" value="1"/>
</dbReference>
<dbReference type="Pfam" id="PF22745">
    <property type="entry name" value="Nlig-Ia"/>
    <property type="match status" value="1"/>
</dbReference>
<dbReference type="PIRSF" id="PIRSF001604">
    <property type="entry name" value="LigA"/>
    <property type="match status" value="1"/>
</dbReference>
<dbReference type="SMART" id="SM00292">
    <property type="entry name" value="BRCT"/>
    <property type="match status" value="1"/>
</dbReference>
<dbReference type="SMART" id="SM00532">
    <property type="entry name" value="LIGANc"/>
    <property type="match status" value="1"/>
</dbReference>
<dbReference type="SUPFAM" id="SSF52113">
    <property type="entry name" value="BRCT domain"/>
    <property type="match status" value="1"/>
</dbReference>
<dbReference type="SUPFAM" id="SSF56091">
    <property type="entry name" value="DNA ligase/mRNA capping enzyme, catalytic domain"/>
    <property type="match status" value="1"/>
</dbReference>
<dbReference type="SUPFAM" id="SSF50249">
    <property type="entry name" value="Nucleic acid-binding proteins"/>
    <property type="match status" value="1"/>
</dbReference>
<dbReference type="SUPFAM" id="SSF47781">
    <property type="entry name" value="RuvA domain 2-like"/>
    <property type="match status" value="1"/>
</dbReference>
<dbReference type="PROSITE" id="PS50172">
    <property type="entry name" value="BRCT"/>
    <property type="match status" value="1"/>
</dbReference>
<organism>
    <name type="scientific">Leptospira interrogans serogroup Icterohaemorrhagiae serovar Lai (strain 56601)</name>
    <dbReference type="NCBI Taxonomy" id="189518"/>
    <lineage>
        <taxon>Bacteria</taxon>
        <taxon>Pseudomonadati</taxon>
        <taxon>Spirochaetota</taxon>
        <taxon>Spirochaetia</taxon>
        <taxon>Leptospirales</taxon>
        <taxon>Leptospiraceae</taxon>
        <taxon>Leptospira</taxon>
    </lineage>
</organism>